<accession>B3F209</accession>
<dbReference type="EMBL" id="EF494246">
    <property type="protein sequence ID" value="ABS44882.1"/>
    <property type="molecule type" value="mRNA"/>
</dbReference>
<dbReference type="RefSeq" id="NP_001123213.1">
    <property type="nucleotide sequence ID" value="NM_001129741.1"/>
</dbReference>
<dbReference type="SMR" id="B3F209"/>
<dbReference type="STRING" id="9940.ENSOARP00000008413"/>
<dbReference type="PaxDb" id="9940-ENSOARP00000008413"/>
<dbReference type="Ensembl" id="ENSOART00040034624">
    <property type="protein sequence ID" value="ENSOARP00040018075"/>
    <property type="gene ID" value="ENSOARG00040020718"/>
</dbReference>
<dbReference type="Ensembl" id="ENSOART00180044415">
    <property type="protein sequence ID" value="ENSOARP00180022841"/>
    <property type="gene ID" value="ENSOARG00180026783"/>
</dbReference>
<dbReference type="Ensembl" id="ENSOART00185029485">
    <property type="protein sequence ID" value="ENSOARP00185014131"/>
    <property type="gene ID" value="ENSOARG00185018081"/>
</dbReference>
<dbReference type="Ensembl" id="ENSOART00215000042">
    <property type="protein sequence ID" value="ENSOARP00215000018"/>
    <property type="gene ID" value="ENSOARG00215000040"/>
</dbReference>
<dbReference type="Ensembl" id="ENSOART00220068676">
    <property type="protein sequence ID" value="ENSOARP00220037089"/>
    <property type="gene ID" value="ENSOARG00220041308"/>
</dbReference>
<dbReference type="Ensembl" id="ENSOART00225003960">
    <property type="protein sequence ID" value="ENSOARP00225001655"/>
    <property type="gene ID" value="ENSOARG00225002496"/>
</dbReference>
<dbReference type="Ensembl" id="ENSOART00260012417">
    <property type="protein sequence ID" value="ENSOARP00260006015"/>
    <property type="gene ID" value="ENSOARG00260007742"/>
</dbReference>
<dbReference type="GeneID" id="100169939"/>
<dbReference type="KEGG" id="oas:100169939"/>
<dbReference type="CTD" id="8553"/>
<dbReference type="eggNOG" id="KOG4304">
    <property type="taxonomic scope" value="Eukaryota"/>
</dbReference>
<dbReference type="OrthoDB" id="690068at2759"/>
<dbReference type="Proteomes" id="UP000002356">
    <property type="component" value="Unplaced"/>
</dbReference>
<dbReference type="GO" id="GO:0005737">
    <property type="term" value="C:cytoplasm"/>
    <property type="evidence" value="ECO:0007669"/>
    <property type="project" value="UniProtKB-SubCell"/>
</dbReference>
<dbReference type="GO" id="GO:0016604">
    <property type="term" value="C:nuclear body"/>
    <property type="evidence" value="ECO:0007669"/>
    <property type="project" value="Ensembl"/>
</dbReference>
<dbReference type="GO" id="GO:0005634">
    <property type="term" value="C:nucleus"/>
    <property type="evidence" value="ECO:0000250"/>
    <property type="project" value="UniProtKB"/>
</dbReference>
<dbReference type="GO" id="GO:0001227">
    <property type="term" value="F:DNA-binding transcription repressor activity, RNA polymerase II-specific"/>
    <property type="evidence" value="ECO:0000250"/>
    <property type="project" value="UniProtKB"/>
</dbReference>
<dbReference type="GO" id="GO:0070888">
    <property type="term" value="F:E-box binding"/>
    <property type="evidence" value="ECO:0000250"/>
    <property type="project" value="UniProtKB"/>
</dbReference>
<dbReference type="GO" id="GO:0043426">
    <property type="term" value="F:MRF binding"/>
    <property type="evidence" value="ECO:0007669"/>
    <property type="project" value="Ensembl"/>
</dbReference>
<dbReference type="GO" id="GO:0019904">
    <property type="term" value="F:protein domain specific binding"/>
    <property type="evidence" value="ECO:0007669"/>
    <property type="project" value="Ensembl"/>
</dbReference>
<dbReference type="GO" id="GO:0046982">
    <property type="term" value="F:protein heterodimerization activity"/>
    <property type="evidence" value="ECO:0007669"/>
    <property type="project" value="Ensembl"/>
</dbReference>
<dbReference type="GO" id="GO:0042803">
    <property type="term" value="F:protein homodimerization activity"/>
    <property type="evidence" value="ECO:0007669"/>
    <property type="project" value="Ensembl"/>
</dbReference>
<dbReference type="GO" id="GO:0061629">
    <property type="term" value="F:RNA polymerase II-specific DNA-binding transcription factor binding"/>
    <property type="evidence" value="ECO:0007669"/>
    <property type="project" value="Ensembl"/>
</dbReference>
<dbReference type="GO" id="GO:0032922">
    <property type="term" value="P:circadian regulation of gene expression"/>
    <property type="evidence" value="ECO:0000250"/>
    <property type="project" value="UniProtKB"/>
</dbReference>
<dbReference type="GO" id="GO:0007623">
    <property type="term" value="P:circadian rhythm"/>
    <property type="evidence" value="ECO:0000250"/>
    <property type="project" value="UniProtKB"/>
</dbReference>
<dbReference type="GO" id="GO:0043153">
    <property type="term" value="P:entrainment of circadian clock by photoperiod"/>
    <property type="evidence" value="ECO:0007669"/>
    <property type="project" value="Ensembl"/>
</dbReference>
<dbReference type="GO" id="GO:0045892">
    <property type="term" value="P:negative regulation of DNA-templated transcription"/>
    <property type="evidence" value="ECO:0000250"/>
    <property type="project" value="UniProtKB"/>
</dbReference>
<dbReference type="GO" id="GO:0042752">
    <property type="term" value="P:regulation of circadian rhythm"/>
    <property type="evidence" value="ECO:0000250"/>
    <property type="project" value="UniProtKB"/>
</dbReference>
<dbReference type="CDD" id="cd19749">
    <property type="entry name" value="bHLH-O_DEC1"/>
    <property type="match status" value="1"/>
</dbReference>
<dbReference type="FunFam" id="4.10.280.10:FF:000020">
    <property type="entry name" value="class E basic helix-loop-helix protein 40"/>
    <property type="match status" value="1"/>
</dbReference>
<dbReference type="Gene3D" id="6.10.250.980">
    <property type="match status" value="1"/>
</dbReference>
<dbReference type="Gene3D" id="4.10.280.10">
    <property type="entry name" value="Helix-loop-helix DNA-binding domain"/>
    <property type="match status" value="1"/>
</dbReference>
<dbReference type="InterPro" id="IPR011598">
    <property type="entry name" value="bHLH_dom"/>
</dbReference>
<dbReference type="InterPro" id="IPR050370">
    <property type="entry name" value="HES_HEY"/>
</dbReference>
<dbReference type="InterPro" id="IPR036638">
    <property type="entry name" value="HLH_DNA-bd_sf"/>
</dbReference>
<dbReference type="InterPro" id="IPR003650">
    <property type="entry name" value="Orange_dom"/>
</dbReference>
<dbReference type="PANTHER" id="PTHR10985">
    <property type="entry name" value="BASIC HELIX-LOOP-HELIX TRANSCRIPTION FACTOR, HES-RELATED"/>
    <property type="match status" value="1"/>
</dbReference>
<dbReference type="Pfam" id="PF07527">
    <property type="entry name" value="Hairy_orange"/>
    <property type="match status" value="1"/>
</dbReference>
<dbReference type="Pfam" id="PF00010">
    <property type="entry name" value="HLH"/>
    <property type="match status" value="1"/>
</dbReference>
<dbReference type="SMART" id="SM00353">
    <property type="entry name" value="HLH"/>
    <property type="match status" value="1"/>
</dbReference>
<dbReference type="SMART" id="SM00511">
    <property type="entry name" value="ORANGE"/>
    <property type="match status" value="1"/>
</dbReference>
<dbReference type="SUPFAM" id="SSF47459">
    <property type="entry name" value="HLH, helix-loop-helix DNA-binding domain"/>
    <property type="match status" value="1"/>
</dbReference>
<dbReference type="SUPFAM" id="SSF158457">
    <property type="entry name" value="Orange domain-like"/>
    <property type="match status" value="1"/>
</dbReference>
<dbReference type="PROSITE" id="PS50888">
    <property type="entry name" value="BHLH"/>
    <property type="match status" value="1"/>
</dbReference>
<dbReference type="PROSITE" id="PS51054">
    <property type="entry name" value="ORANGE"/>
    <property type="match status" value="1"/>
</dbReference>
<evidence type="ECO:0000250" key="1"/>
<evidence type="ECO:0000250" key="2">
    <source>
        <dbReference type="UniProtKB" id="O14503"/>
    </source>
</evidence>
<evidence type="ECO:0000250" key="3">
    <source>
        <dbReference type="UniProtKB" id="O35185"/>
    </source>
</evidence>
<evidence type="ECO:0000255" key="4">
    <source>
        <dbReference type="PROSITE-ProRule" id="PRU00380"/>
    </source>
</evidence>
<evidence type="ECO:0000255" key="5">
    <source>
        <dbReference type="PROSITE-ProRule" id="PRU00981"/>
    </source>
</evidence>
<evidence type="ECO:0000256" key="6">
    <source>
        <dbReference type="SAM" id="MobiDB-lite"/>
    </source>
</evidence>
<sequence>MERIPSAQPPPTCLPKAPGLEPGDLPGMDFAHMYQVYKSRRGIKRSEDSKETYKLPHRLIEKKRRDRINECIAQLKDLLPEHLKLTTLGHLEKAVVLELTLKHVKALTNLIDQQQQKIIALQSGLQAGDLSGRNVEAGQEMFCSGFQTCAREVLQYLAKHENTRDLKSSQLVTHLHRVVSELLQGGTSRKPSDPAPKAMDFKEKPSSLAKGSEGPGKNCVPVIQRTFAHSSGEQSGSDTDTDSGYGGESEKSELRVEQPYFKSDHGRRFTMGERISAIKQESEEPPMKKSRMQLSDDEGPFTSTDLISSPFLGPHPHQPPFCLPFYLIPPSATAYLPMLEKCWYPTSVPVLYPGLNASAAALSSFMNPDKISAPLLMPQRLPSPLPSHPAIDSSALLQALKQIPPLNLETKD</sequence>
<organism>
    <name type="scientific">Ovis aries</name>
    <name type="common">Sheep</name>
    <dbReference type="NCBI Taxonomy" id="9940"/>
    <lineage>
        <taxon>Eukaryota</taxon>
        <taxon>Metazoa</taxon>
        <taxon>Chordata</taxon>
        <taxon>Craniata</taxon>
        <taxon>Vertebrata</taxon>
        <taxon>Euteleostomi</taxon>
        <taxon>Mammalia</taxon>
        <taxon>Eutheria</taxon>
        <taxon>Laurasiatheria</taxon>
        <taxon>Artiodactyla</taxon>
        <taxon>Ruminantia</taxon>
        <taxon>Pecora</taxon>
        <taxon>Bovidae</taxon>
        <taxon>Caprinae</taxon>
        <taxon>Ovis</taxon>
    </lineage>
</organism>
<protein>
    <recommendedName>
        <fullName>Class E basic helix-loop-helix protein 40</fullName>
        <shortName>bHLHe40</shortName>
    </recommendedName>
    <alternativeName>
        <fullName>Class B basic helix-loop-helix protein 2</fullName>
        <shortName>bHLHb2</shortName>
    </alternativeName>
</protein>
<reference key="1">
    <citation type="submission" date="2007-03" db="EMBL/GenBank/DDBJ databases">
        <title>Establishing the sheep as an animal model to study the molecular mechanisms of circadian rhythms.</title>
        <authorList>
            <person name="Dardente H."/>
            <person name="Hazlerigg D.G."/>
        </authorList>
    </citation>
    <scope>NUCLEOTIDE SEQUENCE [MRNA]</scope>
</reference>
<comment type="function">
    <text evidence="2 3">Transcriptional repressor involved in the regulation of the circadian rhythm by negatively regulating the activity of the clock genes and clock-controlled genes. Acts as the negative limb of a novel autoregulatory feedback loop (DEC loop) which differs from the one formed by the PER and CRY transcriptional repressors (PER/CRY loop). Both these loops are interlocked as it represses the expression of PER1/2 and in turn is repressed by PER1/2 and CRY1/2. Represses the activity of the circadian transcriptional activator: CLOCK-BMAL1|BMAL2 heterodimer by competing for the binding to E-box elements (5'-CACGTG-3') found within the promoters of its target genes. Negatively regulates its own expression and the expression of DBP and BHLHE41/DEC2. Acts as a corepressor of RXR and the RXR-LXR heterodimers and represses the ligand-induced RXRA and NR1H3/LXRA transactivation activity. May be involved in the regulation of chondrocyte differentiation via the cAMP pathway (By similarity). Represses the transcription of NR0B2 and attentuates the transactivation of NR0B2 by the CLOCK-BMAL1 complex (By similarity). Drives the circadian rhythm of blood pressure through transcriptional repression of ATP1B1 in the cardiovascular system (By similarity).</text>
</comment>
<comment type="subunit">
    <text evidence="1">Homodimer. Heterodimer with BHLHE41/DEC2. Interacts with TCF3/E47. Interacts with ubiquitin-conjugating enzyme UBE2I/UBC9. Interacts with HDAC1, SUMO1, RXRA and BMAL1 (By similarity).</text>
</comment>
<comment type="subcellular location">
    <subcellularLocation>
        <location evidence="2">Cytoplasm</location>
    </subcellularLocation>
    <subcellularLocation>
        <location evidence="2">Nucleus</location>
    </subcellularLocation>
    <text evidence="2">Predominantly localized in the nucleus (By similarity).</text>
</comment>
<comment type="PTM">
    <text evidence="1">Ubiquitinated; which may lead to proteasomal degradation.</text>
</comment>
<comment type="PTM">
    <text evidence="1">Sumoylation inhibits its ubiquitination and promotes its negative regulation of the CLOCK-BMAL1 heterodimer transcriptional activator activity.</text>
</comment>
<proteinExistence type="evidence at transcript level"/>
<gene>
    <name type="primary">BHLHE40</name>
    <name type="synonym">BHLHB2</name>
</gene>
<feature type="chain" id="PRO_0000354688" description="Class E basic helix-loop-helix protein 40">
    <location>
        <begin position="1"/>
        <end position="412"/>
    </location>
</feature>
<feature type="domain" description="bHLH" evidence="5">
    <location>
        <begin position="52"/>
        <end position="107"/>
    </location>
</feature>
<feature type="domain" description="Orange" evidence="4">
    <location>
        <begin position="142"/>
        <end position="175"/>
    </location>
</feature>
<feature type="region of interest" description="Essential for interaction with BMAL1, E-box binding and repressor activity against the CLOCK-BMAL1 heterodimer" evidence="1">
    <location>
        <begin position="1"/>
        <end position="139"/>
    </location>
</feature>
<feature type="region of interest" description="Disordered" evidence="6">
    <location>
        <begin position="1"/>
        <end position="21"/>
    </location>
</feature>
<feature type="region of interest" description="Necessary for interaction with RXRA and repressor activity against RXRA" evidence="1">
    <location>
        <begin position="75"/>
        <end position="79"/>
    </location>
</feature>
<feature type="region of interest" description="Disordered" evidence="6">
    <location>
        <begin position="182"/>
        <end position="257"/>
    </location>
</feature>
<feature type="region of interest" description="Disordered" evidence="6">
    <location>
        <begin position="279"/>
        <end position="298"/>
    </location>
</feature>
<feature type="compositionally biased region" description="Basic and acidic residues" evidence="6">
    <location>
        <begin position="248"/>
        <end position="257"/>
    </location>
</feature>
<feature type="modified residue" description="Phosphoserine" evidence="2">
    <location>
        <position position="235"/>
    </location>
</feature>
<feature type="modified residue" description="Phosphoserine" evidence="3">
    <location>
        <position position="383"/>
    </location>
</feature>
<feature type="cross-link" description="Glycyl lysine isopeptide (Lys-Gly) (interchain with G-Cter in SUMO1, SUMO2 and SUMO3)" evidence="1">
    <location>
        <position position="159"/>
    </location>
</feature>
<feature type="cross-link" description="Glycyl lysine isopeptide (Lys-Gly) (interchain with G-Cter in SUMO2)" evidence="2">
    <location>
        <position position="167"/>
    </location>
</feature>
<feature type="cross-link" description="Glycyl lysine isopeptide (Lys-Gly) (interchain with G-Cter in SUMO1); alternate" evidence="2">
    <location>
        <position position="279"/>
    </location>
</feature>
<feature type="cross-link" description="Glycyl lysine isopeptide (Lys-Gly) (interchain with G-Cter in SUMO1, SUMO2 and SUMO3); alternate" evidence="1">
    <location>
        <position position="279"/>
    </location>
</feature>
<feature type="cross-link" description="Glycyl lysine isopeptide (Lys-Gly) (interchain with G-Cter in SUMO2); alternate" evidence="2">
    <location>
        <position position="279"/>
    </location>
</feature>
<feature type="cross-link" description="Glycyl lysine isopeptide (Lys-Gly) (interchain with G-Cter in SUMO2)" evidence="2">
    <location>
        <position position="288"/>
    </location>
</feature>
<keyword id="KW-0090">Biological rhythms</keyword>
<keyword id="KW-0963">Cytoplasm</keyword>
<keyword id="KW-0238">DNA-binding</keyword>
<keyword id="KW-1017">Isopeptide bond</keyword>
<keyword id="KW-0539">Nucleus</keyword>
<keyword id="KW-0597">Phosphoprotein</keyword>
<keyword id="KW-1185">Reference proteome</keyword>
<keyword id="KW-0678">Repressor</keyword>
<keyword id="KW-0804">Transcription</keyword>
<keyword id="KW-0805">Transcription regulation</keyword>
<keyword id="KW-0832">Ubl conjugation</keyword>
<name>BHE40_SHEEP</name>